<protein>
    <recommendedName>
        <fullName evidence="1">Nuclear export protein</fullName>
        <shortName evidence="1">NEP</shortName>
    </recommendedName>
    <alternativeName>
        <fullName evidence="1">Non-structural protein 2</fullName>
        <shortName evidence="1">NS2</shortName>
    </alternativeName>
</protein>
<evidence type="ECO:0000255" key="1">
    <source>
        <dbReference type="HAMAP-Rule" id="MF_04067"/>
    </source>
</evidence>
<comment type="function">
    <text evidence="1">Mediates the nuclear export of encapsidated genomic RNAs (ribonucleoproteins, RNPs). Acts as an adapter between viral RNPs complexes and the nuclear export machinery of the cell. Possesses no intrinsic RNA-binding activity, but includes a C-terminal M1-binding domain. This domain is believed to allow recognition of RNPs bound to the protein M1. Since protein M1 is not available in large quantities before late stages of infection, such an indirect recognition mechanism probably ensures that genomic RNPs are not exported from the host nucleus until sufficient quantities of viral mRNA and progeny genomic RNA have been synthesized. Furthermore, the RNPs enter the host cytoplasm only when associated with the M1 protein that is necessary to guide them to the plasma membrane. May down-regulate viral RNA synthesis when overproduced.</text>
</comment>
<comment type="subunit">
    <text evidence="1">Interacts with protein M1. May interact with host nucleoporin RAB/HRB and exportin XPO1/CRM1.</text>
</comment>
<comment type="subcellular location">
    <subcellularLocation>
        <location evidence="1">Virion</location>
    </subcellularLocation>
    <subcellularLocation>
        <location evidence="1">Host nucleus</location>
    </subcellularLocation>
</comment>
<comment type="alternative products">
    <event type="alternative splicing"/>
    <isoform>
        <id>Q289M2-1</id>
        <name>NEP</name>
        <name>NS2</name>
        <sequence type="displayed"/>
    </isoform>
    <isoform>
        <id>Q289M1-1</id>
        <name>NS1</name>
        <sequence type="external"/>
    </isoform>
</comment>
<comment type="miscellaneous">
    <text>Average number present in a viral particle is estimated to be 130-200 molecules.</text>
</comment>
<comment type="similarity">
    <text evidence="1">Belongs to the influenza viruses NEP family.</text>
</comment>
<feature type="chain" id="PRO_0000372945" description="Nuclear export protein">
    <location>
        <begin position="1"/>
        <end position="121"/>
    </location>
</feature>
<feature type="short sequence motif" description="Nuclear export signal" evidence="1">
    <location>
        <begin position="12"/>
        <end position="21"/>
    </location>
</feature>
<feature type="short sequence motif" description="Nuclear export signal" evidence="1">
    <location>
        <begin position="85"/>
        <end position="94"/>
    </location>
</feature>
<gene>
    <name evidence="1" type="primary">NS</name>
</gene>
<reference key="1">
    <citation type="submission" date="2006-03" db="EMBL/GenBank/DDBJ databases">
        <title>The NIAID influenza genome sequencing project.</title>
        <authorList>
            <person name="Ghedin E."/>
            <person name="Spiro D."/>
            <person name="Sengamalay N."/>
            <person name="Zaborsky J."/>
            <person name="Feldblyum T."/>
            <person name="Subbu V."/>
            <person name="Sparenborg J."/>
            <person name="Groveman L."/>
            <person name="Halpin R."/>
            <person name="Shumway M."/>
            <person name="Sitz J."/>
            <person name="Katzel D."/>
            <person name="Koo H."/>
            <person name="Salzberg S.L."/>
            <person name="Jennings L."/>
            <person name="Smit M."/>
            <person name="Wells V."/>
            <person name="Bao Y."/>
            <person name="Bolotov P."/>
            <person name="Dernovoy D."/>
            <person name="Kiryutin B."/>
            <person name="Lipman D.J."/>
            <person name="Tatusova T."/>
        </authorList>
    </citation>
    <scope>NUCLEOTIDE SEQUENCE [GENOMIC RNA]</scope>
</reference>
<reference key="2">
    <citation type="submission" date="2006-03" db="EMBL/GenBank/DDBJ databases">
        <authorList>
            <consortium name="The NIAID Influenza Genome Sequencing Consortium"/>
        </authorList>
    </citation>
    <scope>NUCLEOTIDE SEQUENCE [GENOMIC RNA]</scope>
</reference>
<name>NEP_I00A1</name>
<accession>Q289M2</accession>
<keyword id="KW-0025">Alternative splicing</keyword>
<keyword id="KW-1048">Host nucleus</keyword>
<keyword id="KW-0945">Host-virus interaction</keyword>
<keyword id="KW-0813">Transport</keyword>
<keyword id="KW-0946">Virion</keyword>
<organism>
    <name type="scientific">Influenza A virus (strain A/New Zealand:South Canterbury/35/2000 H1N1)</name>
    <dbReference type="NCBI Taxonomy" id="363066"/>
    <lineage>
        <taxon>Viruses</taxon>
        <taxon>Riboviria</taxon>
        <taxon>Orthornavirae</taxon>
        <taxon>Negarnaviricota</taxon>
        <taxon>Polyploviricotina</taxon>
        <taxon>Insthoviricetes</taxon>
        <taxon>Articulavirales</taxon>
        <taxon>Orthomyxoviridae</taxon>
        <taxon>Alphainfluenzavirus</taxon>
        <taxon>Alphainfluenzavirus influenzae</taxon>
        <taxon>Influenza A virus</taxon>
    </lineage>
</organism>
<organismHost>
    <name type="scientific">Aves</name>
    <dbReference type="NCBI Taxonomy" id="8782"/>
</organismHost>
<organismHost>
    <name type="scientific">Homo sapiens</name>
    <name type="common">Human</name>
    <dbReference type="NCBI Taxonomy" id="9606"/>
</organismHost>
<organismHost>
    <name type="scientific">Sus scrofa</name>
    <name type="common">Pig</name>
    <dbReference type="NCBI Taxonomy" id="9823"/>
</organismHost>
<proteinExistence type="inferred from homology"/>
<dbReference type="EMBL" id="CY009208">
    <property type="protein sequence ID" value="ABD61524.1"/>
    <property type="molecule type" value="Genomic_RNA"/>
</dbReference>
<dbReference type="SMR" id="Q289M2"/>
<dbReference type="Proteomes" id="UP001366552">
    <property type="component" value="Genome"/>
</dbReference>
<dbReference type="GO" id="GO:0042025">
    <property type="term" value="C:host cell nucleus"/>
    <property type="evidence" value="ECO:0007669"/>
    <property type="project" value="UniProtKB-SubCell"/>
</dbReference>
<dbReference type="GO" id="GO:0044423">
    <property type="term" value="C:virion component"/>
    <property type="evidence" value="ECO:0007669"/>
    <property type="project" value="UniProtKB-UniRule"/>
</dbReference>
<dbReference type="GO" id="GO:0039675">
    <property type="term" value="P:exit of virus from host cell nucleus through nuclear pore"/>
    <property type="evidence" value="ECO:0007669"/>
    <property type="project" value="UniProtKB-UniRule"/>
</dbReference>
<dbReference type="Gene3D" id="1.10.287.230">
    <property type="match status" value="1"/>
</dbReference>
<dbReference type="Gene3D" id="1.10.287.10">
    <property type="entry name" value="S15/NS1, RNA-binding"/>
    <property type="match status" value="1"/>
</dbReference>
<dbReference type="HAMAP" id="MF_04067">
    <property type="entry name" value="INFV_NEP"/>
    <property type="match status" value="1"/>
</dbReference>
<dbReference type="InterPro" id="IPR000968">
    <property type="entry name" value="Flu_NS2"/>
</dbReference>
<dbReference type="Pfam" id="PF00601">
    <property type="entry name" value="Flu_NS2"/>
    <property type="match status" value="1"/>
</dbReference>
<dbReference type="SUPFAM" id="SSF101156">
    <property type="entry name" value="Nonstructural protein ns2, Nep, M1-binding domain"/>
    <property type="match status" value="1"/>
</dbReference>
<sequence length="121" mass="14285">MDSHTVSSFQDILMRMSKMQLGSSSGDLNGMITQFESLKLYRDSLGEAVMRLGDLHSLQHRNGKWREQLGQKFEEIRWLIEEVRHKLKTTENSFEQITFMQALQLLFEVEQEIRTFSFQLI</sequence>